<name>MQO_SHIB3</name>
<reference key="1">
    <citation type="submission" date="2008-05" db="EMBL/GenBank/DDBJ databases">
        <title>Complete sequence of Shigella boydii serotype 18 strain BS512.</title>
        <authorList>
            <person name="Rasko D.A."/>
            <person name="Rosovitz M."/>
            <person name="Maurelli A.T."/>
            <person name="Myers G."/>
            <person name="Seshadri R."/>
            <person name="Cer R."/>
            <person name="Jiang L."/>
            <person name="Ravel J."/>
            <person name="Sebastian Y."/>
        </authorList>
    </citation>
    <scope>NUCLEOTIDE SEQUENCE [LARGE SCALE GENOMIC DNA]</scope>
    <source>
        <strain>CDC 3083-94 / BS512</strain>
    </source>
</reference>
<sequence>MKKVTAMLFSMAVGLNAVSMAAKAKASEEQETDVLLIGGGIMSATLGTYLRELEPEWSMTMLERLEGVAQESSNGWNNAGTGHSALMELNYTPQNADGSISIEKAVAINEAFQISRQFWAHQVERGVLRTPRSFINTVPHMSFVWGEDNVNFLRARYAALQQSSLFRGMRYSEDHAQIKEWAPLVMEGRDPQQKVAATRTEIGTDVNYGEITRQLIASLQKKSNFSLQLSSEVRALKRNDDNTWTVTVADLKNGTAQNIRAKFVFIGAGGAALKLLQESGIPEAKDYAGFPVGGQFLVSENPDVVNHHLAKVYGKASVGAPPMSVPHIDTRVLDGKRVVLFGPFATFSTKFLKNGSLWDLMSSTTTSNVMPMMHVGLDNFDLVKYLVSQVMLSEEDRFEALKEYYPQAKKEDWRLWQAGQRVQIIKRDADKGGVLRLGTEVVSDQQGTIAALLGASPGASTAAPIMLDLLEKVFGDRVSSPQWQATLKAIVPSYGRKLNGDVAATERELQYTSEVLGLKYDKPQAADSTPKPQLKPQPVQKEVADIAL</sequence>
<gene>
    <name evidence="1" type="primary">mqo</name>
    <name type="ordered locus">SbBS512_E0730</name>
</gene>
<accession>B2TV25</accession>
<organism>
    <name type="scientific">Shigella boydii serotype 18 (strain CDC 3083-94 / BS512)</name>
    <dbReference type="NCBI Taxonomy" id="344609"/>
    <lineage>
        <taxon>Bacteria</taxon>
        <taxon>Pseudomonadati</taxon>
        <taxon>Pseudomonadota</taxon>
        <taxon>Gammaproteobacteria</taxon>
        <taxon>Enterobacterales</taxon>
        <taxon>Enterobacteriaceae</taxon>
        <taxon>Shigella</taxon>
    </lineage>
</organism>
<proteinExistence type="inferred from homology"/>
<dbReference type="EC" id="1.1.5.4" evidence="1"/>
<dbReference type="EMBL" id="CP001063">
    <property type="protein sequence ID" value="ACD09611.1"/>
    <property type="molecule type" value="Genomic_DNA"/>
</dbReference>
<dbReference type="RefSeq" id="WP_000758039.1">
    <property type="nucleotide sequence ID" value="NC_010658.1"/>
</dbReference>
<dbReference type="SMR" id="B2TV25"/>
<dbReference type="STRING" id="344609.SbBS512_E0730"/>
<dbReference type="KEGG" id="sbc:SbBS512_E0730"/>
<dbReference type="HOGENOM" id="CLU_028151_0_0_6"/>
<dbReference type="UniPathway" id="UPA00223">
    <property type="reaction ID" value="UER01008"/>
</dbReference>
<dbReference type="Proteomes" id="UP000001030">
    <property type="component" value="Chromosome"/>
</dbReference>
<dbReference type="GO" id="GO:0047545">
    <property type="term" value="F:2-hydroxyglutarate dehydrogenase activity"/>
    <property type="evidence" value="ECO:0007669"/>
    <property type="project" value="TreeGrafter"/>
</dbReference>
<dbReference type="GO" id="GO:0008924">
    <property type="term" value="F:L-malate dehydrogenase (quinone) activity"/>
    <property type="evidence" value="ECO:0007669"/>
    <property type="project" value="UniProtKB-UniRule"/>
</dbReference>
<dbReference type="GO" id="GO:0006099">
    <property type="term" value="P:tricarboxylic acid cycle"/>
    <property type="evidence" value="ECO:0007669"/>
    <property type="project" value="UniProtKB-UniRule"/>
</dbReference>
<dbReference type="Gene3D" id="3.30.9.10">
    <property type="entry name" value="D-Amino Acid Oxidase, subunit A, domain 2"/>
    <property type="match status" value="1"/>
</dbReference>
<dbReference type="Gene3D" id="3.50.50.60">
    <property type="entry name" value="FAD/NAD(P)-binding domain"/>
    <property type="match status" value="1"/>
</dbReference>
<dbReference type="HAMAP" id="MF_00212">
    <property type="entry name" value="MQO"/>
    <property type="match status" value="1"/>
</dbReference>
<dbReference type="InterPro" id="IPR036188">
    <property type="entry name" value="FAD/NAD-bd_sf"/>
</dbReference>
<dbReference type="InterPro" id="IPR006231">
    <property type="entry name" value="MQO"/>
</dbReference>
<dbReference type="NCBIfam" id="TIGR01320">
    <property type="entry name" value="mal_quin_oxido"/>
    <property type="match status" value="1"/>
</dbReference>
<dbReference type="NCBIfam" id="NF003603">
    <property type="entry name" value="PRK05257.1-1"/>
    <property type="match status" value="1"/>
</dbReference>
<dbReference type="NCBIfam" id="NF003605">
    <property type="entry name" value="PRK05257.1-4"/>
    <property type="match status" value="1"/>
</dbReference>
<dbReference type="NCBIfam" id="NF003606">
    <property type="entry name" value="PRK05257.2-1"/>
    <property type="match status" value="1"/>
</dbReference>
<dbReference type="NCBIfam" id="NF003608">
    <property type="entry name" value="PRK05257.2-4"/>
    <property type="match status" value="1"/>
</dbReference>
<dbReference type="NCBIfam" id="NF003611">
    <property type="entry name" value="PRK05257.3-2"/>
    <property type="match status" value="1"/>
</dbReference>
<dbReference type="NCBIfam" id="NF009875">
    <property type="entry name" value="PRK13339.1"/>
    <property type="match status" value="1"/>
</dbReference>
<dbReference type="PANTHER" id="PTHR43104">
    <property type="entry name" value="L-2-HYDROXYGLUTARATE DEHYDROGENASE, MITOCHONDRIAL"/>
    <property type="match status" value="1"/>
</dbReference>
<dbReference type="PANTHER" id="PTHR43104:SF2">
    <property type="entry name" value="L-2-HYDROXYGLUTARATE DEHYDROGENASE, MITOCHONDRIAL"/>
    <property type="match status" value="1"/>
</dbReference>
<dbReference type="Pfam" id="PF06039">
    <property type="entry name" value="Mqo"/>
    <property type="match status" value="1"/>
</dbReference>
<dbReference type="SUPFAM" id="SSF51905">
    <property type="entry name" value="FAD/NAD(P)-binding domain"/>
    <property type="match status" value="1"/>
</dbReference>
<comment type="catalytic activity">
    <reaction evidence="1">
        <text>(S)-malate + a quinone = a quinol + oxaloacetate</text>
        <dbReference type="Rhea" id="RHEA:46012"/>
        <dbReference type="ChEBI" id="CHEBI:15589"/>
        <dbReference type="ChEBI" id="CHEBI:16452"/>
        <dbReference type="ChEBI" id="CHEBI:24646"/>
        <dbReference type="ChEBI" id="CHEBI:132124"/>
        <dbReference type="EC" id="1.1.5.4"/>
    </reaction>
</comment>
<comment type="cofactor">
    <cofactor evidence="1">
        <name>FAD</name>
        <dbReference type="ChEBI" id="CHEBI:57692"/>
    </cofactor>
</comment>
<comment type="pathway">
    <text evidence="1">Carbohydrate metabolism; tricarboxylic acid cycle; oxaloacetate from (S)-malate (quinone route): step 1/1.</text>
</comment>
<comment type="similarity">
    <text evidence="1">Belongs to the MQO family.</text>
</comment>
<evidence type="ECO:0000255" key="1">
    <source>
        <dbReference type="HAMAP-Rule" id="MF_00212"/>
    </source>
</evidence>
<evidence type="ECO:0000256" key="2">
    <source>
        <dbReference type="SAM" id="MobiDB-lite"/>
    </source>
</evidence>
<keyword id="KW-0274">FAD</keyword>
<keyword id="KW-0285">Flavoprotein</keyword>
<keyword id="KW-0560">Oxidoreductase</keyword>
<keyword id="KW-1185">Reference proteome</keyword>
<keyword id="KW-0816">Tricarboxylic acid cycle</keyword>
<protein>
    <recommendedName>
        <fullName evidence="1">Probable malate:quinone oxidoreductase</fullName>
        <ecNumber evidence="1">1.1.5.4</ecNumber>
    </recommendedName>
    <alternativeName>
        <fullName evidence="1">MQO</fullName>
    </alternativeName>
    <alternativeName>
        <fullName evidence="1">Malate dehydrogenase [quinone]</fullName>
    </alternativeName>
</protein>
<feature type="chain" id="PRO_1000099881" description="Probable malate:quinone oxidoreductase">
    <location>
        <begin position="1"/>
        <end position="548"/>
    </location>
</feature>
<feature type="region of interest" description="Disordered" evidence="2">
    <location>
        <begin position="521"/>
        <end position="548"/>
    </location>
</feature>
<feature type="compositionally biased region" description="Low complexity" evidence="2">
    <location>
        <begin position="530"/>
        <end position="541"/>
    </location>
</feature>